<reference key="1">
    <citation type="journal article" date="1999" name="Nature">
        <title>Sequence and analysis of chromosome 2 of the plant Arabidopsis thaliana.</title>
        <authorList>
            <person name="Lin X."/>
            <person name="Kaul S."/>
            <person name="Rounsley S.D."/>
            <person name="Shea T.P."/>
            <person name="Benito M.-I."/>
            <person name="Town C.D."/>
            <person name="Fujii C.Y."/>
            <person name="Mason T.M."/>
            <person name="Bowman C.L."/>
            <person name="Barnstead M.E."/>
            <person name="Feldblyum T.V."/>
            <person name="Buell C.R."/>
            <person name="Ketchum K.A."/>
            <person name="Lee J.J."/>
            <person name="Ronning C.M."/>
            <person name="Koo H.L."/>
            <person name="Moffat K.S."/>
            <person name="Cronin L.A."/>
            <person name="Shen M."/>
            <person name="Pai G."/>
            <person name="Van Aken S."/>
            <person name="Umayam L."/>
            <person name="Tallon L.J."/>
            <person name="Gill J.E."/>
            <person name="Adams M.D."/>
            <person name="Carrera A.J."/>
            <person name="Creasy T.H."/>
            <person name="Goodman H.M."/>
            <person name="Somerville C.R."/>
            <person name="Copenhaver G.P."/>
            <person name="Preuss D."/>
            <person name="Nierman W.C."/>
            <person name="White O."/>
            <person name="Eisen J.A."/>
            <person name="Salzberg S.L."/>
            <person name="Fraser C.M."/>
            <person name="Venter J.C."/>
        </authorList>
    </citation>
    <scope>NUCLEOTIDE SEQUENCE [LARGE SCALE GENOMIC DNA]</scope>
    <source>
        <strain>cv. Columbia</strain>
    </source>
</reference>
<reference key="2">
    <citation type="journal article" date="2017" name="Plant J.">
        <title>Araport11: a complete reannotation of the Arabidopsis thaliana reference genome.</title>
        <authorList>
            <person name="Cheng C.Y."/>
            <person name="Krishnakumar V."/>
            <person name="Chan A.P."/>
            <person name="Thibaud-Nissen F."/>
            <person name="Schobel S."/>
            <person name="Town C.D."/>
        </authorList>
    </citation>
    <scope>GENOME REANNOTATION</scope>
    <source>
        <strain>cv. Columbia</strain>
    </source>
</reference>
<reference key="3">
    <citation type="journal article" date="2002" name="Science">
        <title>Functional annotation of a full-length Arabidopsis cDNA collection.</title>
        <authorList>
            <person name="Seki M."/>
            <person name="Narusaka M."/>
            <person name="Kamiya A."/>
            <person name="Ishida J."/>
            <person name="Satou M."/>
            <person name="Sakurai T."/>
            <person name="Nakajima M."/>
            <person name="Enju A."/>
            <person name="Akiyama K."/>
            <person name="Oono Y."/>
            <person name="Muramatsu M."/>
            <person name="Hayashizaki Y."/>
            <person name="Kawai J."/>
            <person name="Carninci P."/>
            <person name="Itoh M."/>
            <person name="Ishii Y."/>
            <person name="Arakawa T."/>
            <person name="Shibata K."/>
            <person name="Shinagawa A."/>
            <person name="Shinozaki K."/>
        </authorList>
    </citation>
    <scope>NUCLEOTIDE SEQUENCE [LARGE SCALE MRNA]</scope>
    <source>
        <strain>cv. Columbia</strain>
    </source>
</reference>
<reference key="4">
    <citation type="journal article" date="2003" name="Science">
        <title>Empirical analysis of transcriptional activity in the Arabidopsis genome.</title>
        <authorList>
            <person name="Yamada K."/>
            <person name="Lim J."/>
            <person name="Dale J.M."/>
            <person name="Chen H."/>
            <person name="Shinn P."/>
            <person name="Palm C.J."/>
            <person name="Southwick A.M."/>
            <person name="Wu H.C."/>
            <person name="Kim C.J."/>
            <person name="Nguyen M."/>
            <person name="Pham P.K."/>
            <person name="Cheuk R.F."/>
            <person name="Karlin-Newmann G."/>
            <person name="Liu S.X."/>
            <person name="Lam B."/>
            <person name="Sakano H."/>
            <person name="Wu T."/>
            <person name="Yu G."/>
            <person name="Miranda M."/>
            <person name="Quach H.L."/>
            <person name="Tripp M."/>
            <person name="Chang C.H."/>
            <person name="Lee J.M."/>
            <person name="Toriumi M.J."/>
            <person name="Chan M.M."/>
            <person name="Tang C.C."/>
            <person name="Onodera C.S."/>
            <person name="Deng J.M."/>
            <person name="Akiyama K."/>
            <person name="Ansari Y."/>
            <person name="Arakawa T."/>
            <person name="Banh J."/>
            <person name="Banno F."/>
            <person name="Bowser L."/>
            <person name="Brooks S.Y."/>
            <person name="Carninci P."/>
            <person name="Chao Q."/>
            <person name="Choy N."/>
            <person name="Enju A."/>
            <person name="Goldsmith A.D."/>
            <person name="Gurjal M."/>
            <person name="Hansen N.F."/>
            <person name="Hayashizaki Y."/>
            <person name="Johnson-Hopson C."/>
            <person name="Hsuan V.W."/>
            <person name="Iida K."/>
            <person name="Karnes M."/>
            <person name="Khan S."/>
            <person name="Koesema E."/>
            <person name="Ishida J."/>
            <person name="Jiang P.X."/>
            <person name="Jones T."/>
            <person name="Kawai J."/>
            <person name="Kamiya A."/>
            <person name="Meyers C."/>
            <person name="Nakajima M."/>
            <person name="Narusaka M."/>
            <person name="Seki M."/>
            <person name="Sakurai T."/>
            <person name="Satou M."/>
            <person name="Tamse R."/>
            <person name="Vaysberg M."/>
            <person name="Wallender E.K."/>
            <person name="Wong C."/>
            <person name="Yamamura Y."/>
            <person name="Yuan S."/>
            <person name="Shinozaki K."/>
            <person name="Davis R.W."/>
            <person name="Theologis A."/>
            <person name="Ecker J.R."/>
        </authorList>
    </citation>
    <scope>NUCLEOTIDE SEQUENCE [LARGE SCALE MRNA]</scope>
    <source>
        <strain>cv. Columbia</strain>
    </source>
</reference>
<reference key="5">
    <citation type="journal article" date="2005" name="Plant Physiol.">
        <title>Genome organization of more than 300 defensin-like genes in Arabidopsis.</title>
        <authorList>
            <person name="Silverstein K.A.T."/>
            <person name="Graham M.A."/>
            <person name="Paape T.D."/>
            <person name="VandenBosch K.A."/>
        </authorList>
    </citation>
    <scope>GENE FAMILY</scope>
</reference>
<comment type="subcellular location">
    <subcellularLocation>
        <location evidence="1">Secreted</location>
    </subcellularLocation>
</comment>
<comment type="similarity">
    <text evidence="3">Belongs to the DEFL family.</text>
</comment>
<keyword id="KW-0929">Antimicrobial</keyword>
<keyword id="KW-1015">Disulfide bond</keyword>
<keyword id="KW-0295">Fungicide</keyword>
<keyword id="KW-0611">Plant defense</keyword>
<keyword id="KW-1185">Reference proteome</keyword>
<keyword id="KW-0964">Secreted</keyword>
<keyword id="KW-0732">Signal</keyword>
<feature type="signal peptide" evidence="2">
    <location>
        <begin position="1"/>
        <end position="24"/>
    </location>
</feature>
<feature type="chain" id="PRO_0000379666" description="Defensin-like protein 103">
    <location>
        <begin position="25"/>
        <end position="89"/>
    </location>
</feature>
<feature type="disulfide bond" evidence="1">
    <location>
        <begin position="46"/>
        <end position="84"/>
    </location>
</feature>
<feature type="disulfide bond" evidence="1">
    <location>
        <begin position="52"/>
        <end position="75"/>
    </location>
</feature>
<feature type="disulfide bond" evidence="1">
    <location>
        <begin position="61"/>
        <end position="82"/>
    </location>
</feature>
<feature type="disulfide bond" evidence="1">
    <location>
        <begin position="65"/>
        <end position="83"/>
    </location>
</feature>
<name>DF103_ARATH</name>
<accession>Q8GXR4</accession>
<evidence type="ECO:0000250" key="1"/>
<evidence type="ECO:0000255" key="2"/>
<evidence type="ECO:0000305" key="3"/>
<organism>
    <name type="scientific">Arabidopsis thaliana</name>
    <name type="common">Mouse-ear cress</name>
    <dbReference type="NCBI Taxonomy" id="3702"/>
    <lineage>
        <taxon>Eukaryota</taxon>
        <taxon>Viridiplantae</taxon>
        <taxon>Streptophyta</taxon>
        <taxon>Embryophyta</taxon>
        <taxon>Tracheophyta</taxon>
        <taxon>Spermatophyta</taxon>
        <taxon>Magnoliopsida</taxon>
        <taxon>eudicotyledons</taxon>
        <taxon>Gunneridae</taxon>
        <taxon>Pentapetalae</taxon>
        <taxon>rosids</taxon>
        <taxon>malvids</taxon>
        <taxon>Brassicales</taxon>
        <taxon>Brassicaceae</taxon>
        <taxon>Camelineae</taxon>
        <taxon>Arabidopsis</taxon>
    </lineage>
</organism>
<gene>
    <name type="ordered locus">At2g20465</name>
    <name type="ORF">T13C7</name>
</gene>
<proteinExistence type="inferred from homology"/>
<sequence>MAITRKNLVAFCFTILFIISSIHCLPTTARSPGYEIGPQRRRRVTCFSFSFCKPARGLASCDLFCKRLKFESGLCTGDLEKCCCIDYIN</sequence>
<dbReference type="EMBL" id="AC007109">
    <property type="status" value="NOT_ANNOTATED_CDS"/>
    <property type="molecule type" value="Genomic_DNA"/>
</dbReference>
<dbReference type="EMBL" id="CP002685">
    <property type="protein sequence ID" value="AEC07012.1"/>
    <property type="molecule type" value="Genomic_DNA"/>
</dbReference>
<dbReference type="EMBL" id="AK118087">
    <property type="protein sequence ID" value="BAC42715.1"/>
    <property type="molecule type" value="mRNA"/>
</dbReference>
<dbReference type="EMBL" id="BT006121">
    <property type="protein sequence ID" value="AAP04106.1"/>
    <property type="molecule type" value="mRNA"/>
</dbReference>
<dbReference type="RefSeq" id="NP_850000.1">
    <property type="nucleotide sequence ID" value="NM_179669.1"/>
</dbReference>
<dbReference type="SMR" id="Q8GXR4"/>
<dbReference type="PaxDb" id="3702-AT2G20465.1"/>
<dbReference type="EnsemblPlants" id="AT2G20465.1">
    <property type="protein sequence ID" value="AT2G20465.1"/>
    <property type="gene ID" value="AT2G20465"/>
</dbReference>
<dbReference type="GeneID" id="816566"/>
<dbReference type="Gramene" id="AT2G20465.1">
    <property type="protein sequence ID" value="AT2G20465.1"/>
    <property type="gene ID" value="AT2G20465"/>
</dbReference>
<dbReference type="KEGG" id="ath:AT2G20465"/>
<dbReference type="Araport" id="AT2G20465"/>
<dbReference type="TAIR" id="AT2G20465"/>
<dbReference type="HOGENOM" id="CLU_183259_0_0_1"/>
<dbReference type="InParanoid" id="Q8GXR4"/>
<dbReference type="OMA" id="CCCIDYI"/>
<dbReference type="OrthoDB" id="1025834at2759"/>
<dbReference type="PhylomeDB" id="Q8GXR4"/>
<dbReference type="PRO" id="PR:Q8GXR4"/>
<dbReference type="Proteomes" id="UP000006548">
    <property type="component" value="Chromosome 2"/>
</dbReference>
<dbReference type="ExpressionAtlas" id="Q8GXR4">
    <property type="expression patterns" value="baseline and differential"/>
</dbReference>
<dbReference type="GO" id="GO:0005576">
    <property type="term" value="C:extracellular region"/>
    <property type="evidence" value="ECO:0007669"/>
    <property type="project" value="UniProtKB-SubCell"/>
</dbReference>
<dbReference type="GO" id="GO:0050832">
    <property type="term" value="P:defense response to fungus"/>
    <property type="evidence" value="ECO:0007669"/>
    <property type="project" value="UniProtKB-KW"/>
</dbReference>
<dbReference type="GO" id="GO:0031640">
    <property type="term" value="P:killing of cells of another organism"/>
    <property type="evidence" value="ECO:0007669"/>
    <property type="project" value="UniProtKB-KW"/>
</dbReference>
<protein>
    <recommendedName>
        <fullName>Defensin-like protein 103</fullName>
    </recommendedName>
</protein>